<evidence type="ECO:0000255" key="1">
    <source>
        <dbReference type="HAMAP-Rule" id="MF_00304"/>
    </source>
</evidence>
<organism>
    <name type="scientific">Fervidobacterium nodosum (strain ATCC 35602 / DSM 5306 / Rt17-B1)</name>
    <dbReference type="NCBI Taxonomy" id="381764"/>
    <lineage>
        <taxon>Bacteria</taxon>
        <taxon>Thermotogati</taxon>
        <taxon>Thermotogota</taxon>
        <taxon>Thermotogae</taxon>
        <taxon>Thermotogales</taxon>
        <taxon>Fervidobacteriaceae</taxon>
        <taxon>Fervidobacterium</taxon>
    </lineage>
</organism>
<reference key="1">
    <citation type="submission" date="2007-07" db="EMBL/GenBank/DDBJ databases">
        <title>Complete sequence of Fervidobacterium nodosum Rt17-B1.</title>
        <authorList>
            <consortium name="US DOE Joint Genome Institute"/>
            <person name="Copeland A."/>
            <person name="Lucas S."/>
            <person name="Lapidus A."/>
            <person name="Barry K."/>
            <person name="Glavina del Rio T."/>
            <person name="Dalin E."/>
            <person name="Tice H."/>
            <person name="Pitluck S."/>
            <person name="Saunders E."/>
            <person name="Brettin T."/>
            <person name="Bruce D."/>
            <person name="Detter J.C."/>
            <person name="Han C."/>
            <person name="Schmutz J."/>
            <person name="Larimer F."/>
            <person name="Land M."/>
            <person name="Hauser L."/>
            <person name="Kyrpides N."/>
            <person name="Mikhailova N."/>
            <person name="Nelson K."/>
            <person name="Gogarten J.P."/>
            <person name="Noll K."/>
            <person name="Richardson P."/>
        </authorList>
    </citation>
    <scope>NUCLEOTIDE SEQUENCE [LARGE SCALE GENOMIC DNA]</scope>
    <source>
        <strain>ATCC 35602 / DSM 5306 / Rt17-B1</strain>
    </source>
</reference>
<accession>A7HMY3</accession>
<protein>
    <recommendedName>
        <fullName evidence="1">Thiamine thiazole synthase</fullName>
        <ecNumber evidence="1">2.4.2.59</ecNumber>
    </recommendedName>
</protein>
<keyword id="KW-0408">Iron</keyword>
<keyword id="KW-0479">Metal-binding</keyword>
<keyword id="KW-0520">NAD</keyword>
<keyword id="KW-1185">Reference proteome</keyword>
<keyword id="KW-0784">Thiamine biosynthesis</keyword>
<keyword id="KW-0808">Transferase</keyword>
<feature type="chain" id="PRO_1000196828" description="Thiamine thiazole synthase">
    <location>
        <begin position="1"/>
        <end position="277"/>
    </location>
</feature>
<feature type="binding site" description="in other chain" evidence="1">
    <location>
        <position position="36"/>
    </location>
    <ligand>
        <name>NAD(+)</name>
        <dbReference type="ChEBI" id="CHEBI:57540"/>
        <note>ligand shared between two adjacent protomers</note>
    </ligand>
</feature>
<feature type="binding site" description="in other chain" evidence="1">
    <location>
        <position position="63"/>
    </location>
    <ligand>
        <name>NAD(+)</name>
        <dbReference type="ChEBI" id="CHEBI:57540"/>
        <note>ligand shared between two adjacent protomers</note>
    </ligand>
</feature>
<feature type="binding site" description="in other chain" evidence="1">
    <location>
        <position position="126"/>
    </location>
    <ligand>
        <name>NAD(+)</name>
        <dbReference type="ChEBI" id="CHEBI:57540"/>
        <note>ligand shared between two adjacent protomers</note>
    </ligand>
</feature>
<feature type="binding site" evidence="1">
    <location>
        <begin position="152"/>
        <end position="154"/>
    </location>
    <ligand>
        <name>NAD(+)</name>
        <dbReference type="ChEBI" id="CHEBI:57540"/>
        <note>ligand shared between two adjacent protomers</note>
    </ligand>
</feature>
<feature type="binding site" evidence="1">
    <location>
        <position position="154"/>
    </location>
    <ligand>
        <name>Fe cation</name>
        <dbReference type="ChEBI" id="CHEBI:24875"/>
        <note>ligand shared between two adjacent protomers</note>
    </ligand>
</feature>
<feature type="binding site" description="in other chain" evidence="1">
    <location>
        <position position="169"/>
    </location>
    <ligand>
        <name>Fe cation</name>
        <dbReference type="ChEBI" id="CHEBI:24875"/>
        <note>ligand shared between two adjacent protomers</note>
    </ligand>
</feature>
<feature type="binding site" description="in other chain" evidence="1">
    <location>
        <position position="230"/>
    </location>
    <ligand>
        <name>NAD(+)</name>
        <dbReference type="ChEBI" id="CHEBI:57540"/>
        <note>ligand shared between two adjacent protomers</note>
    </ligand>
</feature>
<feature type="binding site" evidence="1">
    <location>
        <position position="240"/>
    </location>
    <ligand>
        <name>glycine</name>
        <dbReference type="ChEBI" id="CHEBI:57305"/>
    </ligand>
</feature>
<gene>
    <name evidence="1" type="primary">thi4</name>
    <name type="ordered locus">Fnod_1422</name>
</gene>
<comment type="function">
    <text evidence="1">Involved in the biosynthesis of the thiazole moiety of thiamine. Catalyzes the conversion of NAD and glycine to adenosine diphosphate 5-(2-hydroxyethyl)-4-methylthiazole-2-carboxylate (ADT), an adenylated thiazole intermediate, using free sulfide as a source of sulfur.</text>
</comment>
<comment type="catalytic activity">
    <reaction evidence="1">
        <text>hydrogen sulfide + glycine + NAD(+) = ADP-5-ethyl-4-methylthiazole-2-carboxylate + nicotinamide + 3 H2O + H(+)</text>
        <dbReference type="Rhea" id="RHEA:55704"/>
        <dbReference type="ChEBI" id="CHEBI:15377"/>
        <dbReference type="ChEBI" id="CHEBI:15378"/>
        <dbReference type="ChEBI" id="CHEBI:17154"/>
        <dbReference type="ChEBI" id="CHEBI:29919"/>
        <dbReference type="ChEBI" id="CHEBI:57305"/>
        <dbReference type="ChEBI" id="CHEBI:57540"/>
        <dbReference type="ChEBI" id="CHEBI:139151"/>
        <dbReference type="EC" id="2.4.2.59"/>
    </reaction>
</comment>
<comment type="cofactor">
    <cofactor evidence="1">
        <name>Fe(2+)</name>
        <dbReference type="ChEBI" id="CHEBI:29033"/>
    </cofactor>
</comment>
<comment type="pathway">
    <text evidence="1">Cofactor biosynthesis; thiamine diphosphate biosynthesis.</text>
</comment>
<comment type="subunit">
    <text evidence="1">Homooctamer; tetramer of dimers.</text>
</comment>
<comment type="similarity">
    <text evidence="1">Belongs to the THI4 family.</text>
</comment>
<sequence length="277" mass="30672">MSMKDLKISQLIVKHYFQKLNDVLNVDVAIAGCGPSALALATELAKNGRKVAIFEAKNEPGGGIWGGGMMFNELVLESELEWYLKEHHIKYKKEDEFIVVDAVHFASAMLYNATKNGAYIFNNVFVEDLVMYNERISGVVINWMPTIKEKLHVDPITVVAKFTVDGTGHPANLVRLLSKRGIINSVKGSSENLCSCGVVEYEFPMDAENGEKFVVENTKEIYPGLYVMGMAAVSVGGGPRMGPIFGGMIMSGLRAAELIEEELKRIETSEDKMWVRV</sequence>
<name>THI4_FERNB</name>
<proteinExistence type="inferred from homology"/>
<dbReference type="EC" id="2.4.2.59" evidence="1"/>
<dbReference type="EMBL" id="CP000771">
    <property type="protein sequence ID" value="ABS61266.1"/>
    <property type="molecule type" value="Genomic_DNA"/>
</dbReference>
<dbReference type="SMR" id="A7HMY3"/>
<dbReference type="STRING" id="381764.Fnod_1422"/>
<dbReference type="KEGG" id="fno:Fnod_1422"/>
<dbReference type="eggNOG" id="COG1635">
    <property type="taxonomic scope" value="Bacteria"/>
</dbReference>
<dbReference type="HOGENOM" id="CLU_053727_2_0_0"/>
<dbReference type="OrthoDB" id="9806565at2"/>
<dbReference type="UniPathway" id="UPA00060"/>
<dbReference type="Proteomes" id="UP000002415">
    <property type="component" value="Chromosome"/>
</dbReference>
<dbReference type="GO" id="GO:0005506">
    <property type="term" value="F:iron ion binding"/>
    <property type="evidence" value="ECO:0007669"/>
    <property type="project" value="UniProtKB-UniRule"/>
</dbReference>
<dbReference type="GO" id="GO:0016763">
    <property type="term" value="F:pentosyltransferase activity"/>
    <property type="evidence" value="ECO:0007669"/>
    <property type="project" value="UniProtKB-UniRule"/>
</dbReference>
<dbReference type="GO" id="GO:0009228">
    <property type="term" value="P:thiamine biosynthetic process"/>
    <property type="evidence" value="ECO:0007669"/>
    <property type="project" value="UniProtKB-KW"/>
</dbReference>
<dbReference type="GO" id="GO:0009229">
    <property type="term" value="P:thiamine diphosphate biosynthetic process"/>
    <property type="evidence" value="ECO:0007669"/>
    <property type="project" value="UniProtKB-UniRule"/>
</dbReference>
<dbReference type="GO" id="GO:0052837">
    <property type="term" value="P:thiazole biosynthetic process"/>
    <property type="evidence" value="ECO:0007669"/>
    <property type="project" value="UniProtKB-UniRule"/>
</dbReference>
<dbReference type="Gene3D" id="3.50.50.60">
    <property type="entry name" value="FAD/NAD(P)-binding domain"/>
    <property type="match status" value="1"/>
</dbReference>
<dbReference type="HAMAP" id="MF_00304">
    <property type="entry name" value="Thi4"/>
    <property type="match status" value="1"/>
</dbReference>
<dbReference type="InterPro" id="IPR036188">
    <property type="entry name" value="FAD/NAD-bd_sf"/>
</dbReference>
<dbReference type="InterPro" id="IPR002922">
    <property type="entry name" value="Thi4_fam"/>
</dbReference>
<dbReference type="InterPro" id="IPR022828">
    <property type="entry name" value="Thi4_prok"/>
</dbReference>
<dbReference type="NCBIfam" id="TIGR00292">
    <property type="entry name" value="sulfide-dependent adenosine diphosphate thiazole synthase"/>
    <property type="match status" value="1"/>
</dbReference>
<dbReference type="PANTHER" id="PTHR43422">
    <property type="entry name" value="THIAMINE THIAZOLE SYNTHASE"/>
    <property type="match status" value="1"/>
</dbReference>
<dbReference type="PANTHER" id="PTHR43422:SF3">
    <property type="entry name" value="THIAMINE THIAZOLE SYNTHASE"/>
    <property type="match status" value="1"/>
</dbReference>
<dbReference type="Pfam" id="PF01946">
    <property type="entry name" value="Thi4"/>
    <property type="match status" value="1"/>
</dbReference>
<dbReference type="PRINTS" id="PR00419">
    <property type="entry name" value="ADXRDTASE"/>
</dbReference>
<dbReference type="SUPFAM" id="SSF51905">
    <property type="entry name" value="FAD/NAD(P)-binding domain"/>
    <property type="match status" value="1"/>
</dbReference>